<organism>
    <name type="scientific">Escherichia coli (strain UTI89 / UPEC)</name>
    <dbReference type="NCBI Taxonomy" id="364106"/>
    <lineage>
        <taxon>Bacteria</taxon>
        <taxon>Pseudomonadati</taxon>
        <taxon>Pseudomonadota</taxon>
        <taxon>Gammaproteobacteria</taxon>
        <taxon>Enterobacterales</taxon>
        <taxon>Enterobacteriaceae</taxon>
        <taxon>Escherichia</taxon>
    </lineage>
</organism>
<gene>
    <name evidence="1" type="primary">hfq</name>
    <name type="ordered locus">UTI89_C4772</name>
</gene>
<keyword id="KW-0694">RNA-binding</keyword>
<keyword id="KW-0346">Stress response</keyword>
<evidence type="ECO:0000255" key="1">
    <source>
        <dbReference type="HAMAP-Rule" id="MF_00436"/>
    </source>
</evidence>
<evidence type="ECO:0000255" key="2">
    <source>
        <dbReference type="PROSITE-ProRule" id="PRU01346"/>
    </source>
</evidence>
<evidence type="ECO:0000256" key="3">
    <source>
        <dbReference type="SAM" id="MobiDB-lite"/>
    </source>
</evidence>
<name>HFQ_ECOUT</name>
<accession>Q1R388</accession>
<protein>
    <recommendedName>
        <fullName evidence="1">RNA-binding protein Hfq</fullName>
    </recommendedName>
</protein>
<proteinExistence type="inferred from homology"/>
<dbReference type="EMBL" id="CP000243">
    <property type="protein sequence ID" value="ABE10176.1"/>
    <property type="molecule type" value="Genomic_DNA"/>
</dbReference>
<dbReference type="RefSeq" id="WP_001051883.1">
    <property type="nucleotide sequence ID" value="NZ_CP064825.1"/>
</dbReference>
<dbReference type="SMR" id="Q1R388"/>
<dbReference type="GeneID" id="93777649"/>
<dbReference type="KEGG" id="eci:UTI89_C4772"/>
<dbReference type="HOGENOM" id="CLU_113688_2_1_6"/>
<dbReference type="Proteomes" id="UP000001952">
    <property type="component" value="Chromosome"/>
</dbReference>
<dbReference type="GO" id="GO:0005829">
    <property type="term" value="C:cytosol"/>
    <property type="evidence" value="ECO:0007669"/>
    <property type="project" value="TreeGrafter"/>
</dbReference>
<dbReference type="GO" id="GO:0003723">
    <property type="term" value="F:RNA binding"/>
    <property type="evidence" value="ECO:0007669"/>
    <property type="project" value="UniProtKB-UniRule"/>
</dbReference>
<dbReference type="GO" id="GO:0006355">
    <property type="term" value="P:regulation of DNA-templated transcription"/>
    <property type="evidence" value="ECO:0007669"/>
    <property type="project" value="InterPro"/>
</dbReference>
<dbReference type="GO" id="GO:0043487">
    <property type="term" value="P:regulation of RNA stability"/>
    <property type="evidence" value="ECO:0007669"/>
    <property type="project" value="TreeGrafter"/>
</dbReference>
<dbReference type="GO" id="GO:0045974">
    <property type="term" value="P:regulation of translation, ncRNA-mediated"/>
    <property type="evidence" value="ECO:0007669"/>
    <property type="project" value="TreeGrafter"/>
</dbReference>
<dbReference type="CDD" id="cd01716">
    <property type="entry name" value="Hfq"/>
    <property type="match status" value="1"/>
</dbReference>
<dbReference type="FunFam" id="2.30.30.100:FF:000001">
    <property type="entry name" value="RNA-binding protein Hfq"/>
    <property type="match status" value="1"/>
</dbReference>
<dbReference type="Gene3D" id="2.30.30.100">
    <property type="match status" value="1"/>
</dbReference>
<dbReference type="HAMAP" id="MF_00436">
    <property type="entry name" value="Hfq"/>
    <property type="match status" value="1"/>
</dbReference>
<dbReference type="InterPro" id="IPR005001">
    <property type="entry name" value="Hfq"/>
</dbReference>
<dbReference type="InterPro" id="IPR010920">
    <property type="entry name" value="LSM_dom_sf"/>
</dbReference>
<dbReference type="InterPro" id="IPR047575">
    <property type="entry name" value="Sm"/>
</dbReference>
<dbReference type="NCBIfam" id="TIGR02383">
    <property type="entry name" value="Hfq"/>
    <property type="match status" value="1"/>
</dbReference>
<dbReference type="NCBIfam" id="NF001602">
    <property type="entry name" value="PRK00395.1"/>
    <property type="match status" value="1"/>
</dbReference>
<dbReference type="PANTHER" id="PTHR34772">
    <property type="entry name" value="RNA-BINDING PROTEIN HFQ"/>
    <property type="match status" value="1"/>
</dbReference>
<dbReference type="PANTHER" id="PTHR34772:SF1">
    <property type="entry name" value="RNA-BINDING PROTEIN HFQ"/>
    <property type="match status" value="1"/>
</dbReference>
<dbReference type="Pfam" id="PF17209">
    <property type="entry name" value="Hfq"/>
    <property type="match status" value="1"/>
</dbReference>
<dbReference type="SUPFAM" id="SSF50182">
    <property type="entry name" value="Sm-like ribonucleoproteins"/>
    <property type="match status" value="1"/>
</dbReference>
<dbReference type="PROSITE" id="PS52002">
    <property type="entry name" value="SM"/>
    <property type="match status" value="1"/>
</dbReference>
<comment type="function">
    <text evidence="1">RNA chaperone that binds small regulatory RNA (sRNAs) and mRNAs to facilitate mRNA translational regulation in response to envelope stress, environmental stress and changes in metabolite concentrations. Also binds with high specificity to tRNAs.</text>
</comment>
<comment type="subunit">
    <text evidence="1">Homohexamer.</text>
</comment>
<comment type="similarity">
    <text evidence="1">Belongs to the Hfq family.</text>
</comment>
<sequence>MAKGQSLQDPFLNALRRERVPVSIYLVNGIKLQGQIESFDQFVILLKNTVSQMVYKHAISTVVPSRPVSHHSNNAGGGTSSNYHHGSSAQNTSAQQDSEETE</sequence>
<feature type="chain" id="PRO_0000265154" description="RNA-binding protein Hfq">
    <location>
        <begin position="1"/>
        <end position="102"/>
    </location>
</feature>
<feature type="domain" description="Sm" evidence="2">
    <location>
        <begin position="9"/>
        <end position="68"/>
    </location>
</feature>
<feature type="region of interest" description="Disordered" evidence="3">
    <location>
        <begin position="63"/>
        <end position="102"/>
    </location>
</feature>
<feature type="compositionally biased region" description="Polar residues" evidence="3">
    <location>
        <begin position="70"/>
        <end position="96"/>
    </location>
</feature>
<reference key="1">
    <citation type="journal article" date="2006" name="Proc. Natl. Acad. Sci. U.S.A.">
        <title>Identification of genes subject to positive selection in uropathogenic strains of Escherichia coli: a comparative genomics approach.</title>
        <authorList>
            <person name="Chen S.L."/>
            <person name="Hung C.-S."/>
            <person name="Xu J."/>
            <person name="Reigstad C.S."/>
            <person name="Magrini V."/>
            <person name="Sabo A."/>
            <person name="Blasiar D."/>
            <person name="Bieri T."/>
            <person name="Meyer R.R."/>
            <person name="Ozersky P."/>
            <person name="Armstrong J.R."/>
            <person name="Fulton R.S."/>
            <person name="Latreille J.P."/>
            <person name="Spieth J."/>
            <person name="Hooton T.M."/>
            <person name="Mardis E.R."/>
            <person name="Hultgren S.J."/>
            <person name="Gordon J.I."/>
        </authorList>
    </citation>
    <scope>NUCLEOTIDE SEQUENCE [LARGE SCALE GENOMIC DNA]</scope>
    <source>
        <strain>UTI89 / UPEC</strain>
    </source>
</reference>